<accession>Q54BU4</accession>
<accession>Q8T9W6</accession>
<dbReference type="EMBL" id="AF466304">
    <property type="protein sequence ID" value="AAL74248.1"/>
    <property type="molecule type" value="Genomic_DNA"/>
</dbReference>
<dbReference type="EMBL" id="AAFI02000208">
    <property type="protein sequence ID" value="EAL60729.1"/>
    <property type="molecule type" value="Genomic_DNA"/>
</dbReference>
<dbReference type="RefSeq" id="XP_629144.1">
    <property type="nucleotide sequence ID" value="XM_629142.1"/>
</dbReference>
<dbReference type="SMR" id="Q54BU4"/>
<dbReference type="FunCoup" id="Q54BU4">
    <property type="interactions" value="180"/>
</dbReference>
<dbReference type="STRING" id="44689.Q54BU4"/>
<dbReference type="GlyGen" id="Q54BU4">
    <property type="glycosylation" value="4 sites"/>
</dbReference>
<dbReference type="PaxDb" id="44689-DDB0201666"/>
<dbReference type="EnsemblProtists" id="EAL60729">
    <property type="protein sequence ID" value="EAL60729"/>
    <property type="gene ID" value="DDB_G0293416"/>
</dbReference>
<dbReference type="GeneID" id="8629215"/>
<dbReference type="KEGG" id="ddi:DDB_G0293416"/>
<dbReference type="dictyBase" id="DDB_G0293416">
    <property type="gene designation" value="abcB1"/>
</dbReference>
<dbReference type="VEuPathDB" id="AmoebaDB:DDB_G0293416"/>
<dbReference type="eggNOG" id="KOG0058">
    <property type="taxonomic scope" value="Eukaryota"/>
</dbReference>
<dbReference type="HOGENOM" id="CLU_319700_0_0_1"/>
<dbReference type="InParanoid" id="Q54BU4"/>
<dbReference type="OMA" id="MLFRYTI"/>
<dbReference type="PhylomeDB" id="Q54BU4"/>
<dbReference type="PRO" id="PR:Q54BU4"/>
<dbReference type="Proteomes" id="UP000002195">
    <property type="component" value="Chromosome 6"/>
</dbReference>
<dbReference type="GO" id="GO:0016020">
    <property type="term" value="C:membrane"/>
    <property type="evidence" value="ECO:0000318"/>
    <property type="project" value="GO_Central"/>
</dbReference>
<dbReference type="GO" id="GO:0140359">
    <property type="term" value="F:ABC-type transporter activity"/>
    <property type="evidence" value="ECO:0007669"/>
    <property type="project" value="InterPro"/>
</dbReference>
<dbReference type="GO" id="GO:0005524">
    <property type="term" value="F:ATP binding"/>
    <property type="evidence" value="ECO:0007669"/>
    <property type="project" value="UniProtKB-KW"/>
</dbReference>
<dbReference type="GO" id="GO:0016887">
    <property type="term" value="F:ATP hydrolysis activity"/>
    <property type="evidence" value="ECO:0007669"/>
    <property type="project" value="InterPro"/>
</dbReference>
<dbReference type="GO" id="GO:0042626">
    <property type="term" value="F:ATPase-coupled transmembrane transporter activity"/>
    <property type="evidence" value="ECO:0000318"/>
    <property type="project" value="GO_Central"/>
</dbReference>
<dbReference type="GO" id="GO:0006935">
    <property type="term" value="P:chemotaxis"/>
    <property type="evidence" value="ECO:0000315"/>
    <property type="project" value="dictyBase"/>
</dbReference>
<dbReference type="GO" id="GO:0031154">
    <property type="term" value="P:culmination involved in sorocarp development"/>
    <property type="evidence" value="ECO:0000315"/>
    <property type="project" value="dictyBase"/>
</dbReference>
<dbReference type="GO" id="GO:0006972">
    <property type="term" value="P:hyperosmotic response"/>
    <property type="evidence" value="ECO:0000270"/>
    <property type="project" value="dictyBase"/>
</dbReference>
<dbReference type="GO" id="GO:0055085">
    <property type="term" value="P:transmembrane transport"/>
    <property type="evidence" value="ECO:0000318"/>
    <property type="project" value="GO_Central"/>
</dbReference>
<dbReference type="CDD" id="cd18780">
    <property type="entry name" value="ABC_6TM_AtABCB27_like"/>
    <property type="match status" value="1"/>
</dbReference>
<dbReference type="CDD" id="cd03249">
    <property type="entry name" value="ABC_MTABC3_MDL1_MDL2"/>
    <property type="match status" value="1"/>
</dbReference>
<dbReference type="FunFam" id="1.20.1560.10:FF:000058">
    <property type="entry name" value="ABC transporter B family member 25"/>
    <property type="match status" value="1"/>
</dbReference>
<dbReference type="FunFam" id="3.40.50.300:FF:000403">
    <property type="entry name" value="ATP-binding cassette sub-family B member 8, mitochondrial"/>
    <property type="match status" value="1"/>
</dbReference>
<dbReference type="Gene3D" id="1.20.1560.10">
    <property type="entry name" value="ABC transporter type 1, transmembrane domain"/>
    <property type="match status" value="1"/>
</dbReference>
<dbReference type="Gene3D" id="3.40.50.300">
    <property type="entry name" value="P-loop containing nucleotide triphosphate hydrolases"/>
    <property type="match status" value="1"/>
</dbReference>
<dbReference type="InterPro" id="IPR003593">
    <property type="entry name" value="AAA+_ATPase"/>
</dbReference>
<dbReference type="InterPro" id="IPR011527">
    <property type="entry name" value="ABC1_TM_dom"/>
</dbReference>
<dbReference type="InterPro" id="IPR036640">
    <property type="entry name" value="ABC1_TM_sf"/>
</dbReference>
<dbReference type="InterPro" id="IPR003439">
    <property type="entry name" value="ABC_transporter-like_ATP-bd"/>
</dbReference>
<dbReference type="InterPro" id="IPR017871">
    <property type="entry name" value="ABC_transporter-like_CS"/>
</dbReference>
<dbReference type="InterPro" id="IPR027417">
    <property type="entry name" value="P-loop_NTPase"/>
</dbReference>
<dbReference type="InterPro" id="IPR039421">
    <property type="entry name" value="Type_1_exporter"/>
</dbReference>
<dbReference type="PANTHER" id="PTHR43394:SF1">
    <property type="entry name" value="ATP-BINDING CASSETTE SUB-FAMILY B MEMBER 10, MITOCHONDRIAL"/>
    <property type="match status" value="1"/>
</dbReference>
<dbReference type="PANTHER" id="PTHR43394">
    <property type="entry name" value="ATP-DEPENDENT PERMEASE MDL1, MITOCHONDRIAL"/>
    <property type="match status" value="1"/>
</dbReference>
<dbReference type="Pfam" id="PF00664">
    <property type="entry name" value="ABC_membrane"/>
    <property type="match status" value="1"/>
</dbReference>
<dbReference type="Pfam" id="PF00005">
    <property type="entry name" value="ABC_tran"/>
    <property type="match status" value="1"/>
</dbReference>
<dbReference type="SMART" id="SM00382">
    <property type="entry name" value="AAA"/>
    <property type="match status" value="1"/>
</dbReference>
<dbReference type="SUPFAM" id="SSF90123">
    <property type="entry name" value="ABC transporter transmembrane region"/>
    <property type="match status" value="1"/>
</dbReference>
<dbReference type="SUPFAM" id="SSF52540">
    <property type="entry name" value="P-loop containing nucleoside triphosphate hydrolases"/>
    <property type="match status" value="1"/>
</dbReference>
<dbReference type="PROSITE" id="PS50929">
    <property type="entry name" value="ABC_TM1F"/>
    <property type="match status" value="1"/>
</dbReference>
<dbReference type="PROSITE" id="PS00211">
    <property type="entry name" value="ABC_TRANSPORTER_1"/>
    <property type="match status" value="1"/>
</dbReference>
<dbReference type="PROSITE" id="PS50893">
    <property type="entry name" value="ABC_TRANSPORTER_2"/>
    <property type="match status" value="1"/>
</dbReference>
<comment type="subcellular location">
    <subcellularLocation>
        <location evidence="2">Membrane</location>
        <topology evidence="2">Multi-pass membrane protein</topology>
    </subcellularLocation>
</comment>
<comment type="similarity">
    <text evidence="4">Belongs to the ABC transporter superfamily. ABCB family.</text>
</comment>
<evidence type="ECO:0000255" key="1">
    <source>
        <dbReference type="PROSITE-ProRule" id="PRU00434"/>
    </source>
</evidence>
<evidence type="ECO:0000255" key="2">
    <source>
        <dbReference type="PROSITE-ProRule" id="PRU00441"/>
    </source>
</evidence>
<evidence type="ECO:0000256" key="3">
    <source>
        <dbReference type="SAM" id="MobiDB-lite"/>
    </source>
</evidence>
<evidence type="ECO:0000305" key="4"/>
<organism>
    <name type="scientific">Dictyostelium discoideum</name>
    <name type="common">Social amoeba</name>
    <dbReference type="NCBI Taxonomy" id="44689"/>
    <lineage>
        <taxon>Eukaryota</taxon>
        <taxon>Amoebozoa</taxon>
        <taxon>Evosea</taxon>
        <taxon>Eumycetozoa</taxon>
        <taxon>Dictyostelia</taxon>
        <taxon>Dictyosteliales</taxon>
        <taxon>Dictyosteliaceae</taxon>
        <taxon>Dictyostelium</taxon>
    </lineage>
</organism>
<keyword id="KW-0067">ATP-binding</keyword>
<keyword id="KW-0472">Membrane</keyword>
<keyword id="KW-0547">Nucleotide-binding</keyword>
<keyword id="KW-1185">Reference proteome</keyword>
<keyword id="KW-0812">Transmembrane</keyword>
<keyword id="KW-1133">Transmembrane helix</keyword>
<keyword id="KW-0813">Transport</keyword>
<protein>
    <recommendedName>
        <fullName>ABC transporter B family member 1</fullName>
    </recommendedName>
    <alternativeName>
        <fullName>ABC transporter ABCB.1</fullName>
    </alternativeName>
</protein>
<sequence length="909" mass="101293">MTKKNFNDEENESLLETYNKQQQKQSISTTNRSDQKFGINNANKQFSLNNKKSINGEEIDEEELIEDTIFFKFKLDSKQRNSIKLFIQIVSLVILAGYLISINALYFSTNARSIIFYPSINSNTTDSGSVSPTSTPSPTPTPTPSPTSLLLQTLTSTTTSYDSSEIEALNGGTFNMKYFFYFSTFDILLISYFISLFWLLLIFSDSFIYHTISYIITIIALIYNVIKSYFTITQILSINNNIITTSSSSNEIYNGSDSYLPNESPLFDSLKVREIIIVIVLVGIPLMVLFLVLHIITLQLSFKKYKRLSDKEKQFYNQSNEEKRLNKKVEVKHSNLKRLIQLSRPELPIILAAMVALVFSSLTSLAMPYFFGSIVQVVATTHSFNNLNSSTLALVVIFVIGSISTLVRSWLFYLAGQKFVARIRRNLFSSIVNQEIGYFDQCRTGELLSRLSSDSQVIQNSVTVNISMLFRYTIQIIGSVILLFITNWRLTLLMLGIVPVLAISTVVYGKKIKQLGKQFQDELAKSSTTGEEVISNIRTVRSFSKEQKFIDLYSKDINGSYLIGKSLAVATGVFSGIVFLVAQLAIVLIVYVGARQVLDGTLSTGDLTSFLLYTLSLAMSLAFISSLMTDFLKAIGSSDRIFEIFDRVPAINVSGGKQIQNPLGEIELKDVEFSYPTRPNNSVLKGLNLKLSKGTITALVGPSGGGKSTVIAMIERFYDPNSGSITFDGIDIKELDPVWYRGIIGYVSQEPVLFAGSIKDNITFGNDSATMDQIISAAEKANAHSFIEEFENGYDTIVGERGVRLSGGQKQRVAIARAMIQNPMILLLDEATSALDAESEYLVKQAIDEIMKDRTVIVIAHRLSTVINANTVVVINQGKIEEMGTHKELLNNTDGIYHNLVKRQLSSDD</sequence>
<gene>
    <name type="primary">abcB1</name>
    <name type="synonym">mrpA</name>
    <name type="ORF">DDB_G0293416</name>
</gene>
<reference key="1">
    <citation type="journal article" date="2002" name="Eukaryot. Cell">
        <title>Evolutionary analyses of ABC transporters of Dictyostelium discoideum.</title>
        <authorList>
            <person name="Anjard C."/>
            <person name="Loomis W.F."/>
        </authorList>
    </citation>
    <scope>NUCLEOTIDE SEQUENCE [GENOMIC DNA]</scope>
    <scope>NOMENCLATURE</scope>
    <source>
        <strain>AX4</strain>
    </source>
</reference>
<reference key="2">
    <citation type="journal article" date="2005" name="Nature">
        <title>The genome of the social amoeba Dictyostelium discoideum.</title>
        <authorList>
            <person name="Eichinger L."/>
            <person name="Pachebat J.A."/>
            <person name="Gloeckner G."/>
            <person name="Rajandream M.A."/>
            <person name="Sucgang R."/>
            <person name="Berriman M."/>
            <person name="Song J."/>
            <person name="Olsen R."/>
            <person name="Szafranski K."/>
            <person name="Xu Q."/>
            <person name="Tunggal B."/>
            <person name="Kummerfeld S."/>
            <person name="Madera M."/>
            <person name="Konfortov B.A."/>
            <person name="Rivero F."/>
            <person name="Bankier A.T."/>
            <person name="Lehmann R."/>
            <person name="Hamlin N."/>
            <person name="Davies R."/>
            <person name="Gaudet P."/>
            <person name="Fey P."/>
            <person name="Pilcher K."/>
            <person name="Chen G."/>
            <person name="Saunders D."/>
            <person name="Sodergren E.J."/>
            <person name="Davis P."/>
            <person name="Kerhornou A."/>
            <person name="Nie X."/>
            <person name="Hall N."/>
            <person name="Anjard C."/>
            <person name="Hemphill L."/>
            <person name="Bason N."/>
            <person name="Farbrother P."/>
            <person name="Desany B."/>
            <person name="Just E."/>
            <person name="Morio T."/>
            <person name="Rost R."/>
            <person name="Churcher C.M."/>
            <person name="Cooper J."/>
            <person name="Haydock S."/>
            <person name="van Driessche N."/>
            <person name="Cronin A."/>
            <person name="Goodhead I."/>
            <person name="Muzny D.M."/>
            <person name="Mourier T."/>
            <person name="Pain A."/>
            <person name="Lu M."/>
            <person name="Harper D."/>
            <person name="Lindsay R."/>
            <person name="Hauser H."/>
            <person name="James K.D."/>
            <person name="Quiles M."/>
            <person name="Madan Babu M."/>
            <person name="Saito T."/>
            <person name="Buchrieser C."/>
            <person name="Wardroper A."/>
            <person name="Felder M."/>
            <person name="Thangavelu M."/>
            <person name="Johnson D."/>
            <person name="Knights A."/>
            <person name="Loulseged H."/>
            <person name="Mungall K.L."/>
            <person name="Oliver K."/>
            <person name="Price C."/>
            <person name="Quail M.A."/>
            <person name="Urushihara H."/>
            <person name="Hernandez J."/>
            <person name="Rabbinowitsch E."/>
            <person name="Steffen D."/>
            <person name="Sanders M."/>
            <person name="Ma J."/>
            <person name="Kohara Y."/>
            <person name="Sharp S."/>
            <person name="Simmonds M.N."/>
            <person name="Spiegler S."/>
            <person name="Tivey A."/>
            <person name="Sugano S."/>
            <person name="White B."/>
            <person name="Walker D."/>
            <person name="Woodward J.R."/>
            <person name="Winckler T."/>
            <person name="Tanaka Y."/>
            <person name="Shaulsky G."/>
            <person name="Schleicher M."/>
            <person name="Weinstock G.M."/>
            <person name="Rosenthal A."/>
            <person name="Cox E.C."/>
            <person name="Chisholm R.L."/>
            <person name="Gibbs R.A."/>
            <person name="Loomis W.F."/>
            <person name="Platzer M."/>
            <person name="Kay R.R."/>
            <person name="Williams J.G."/>
            <person name="Dear P.H."/>
            <person name="Noegel A.A."/>
            <person name="Barrell B.G."/>
            <person name="Kuspa A."/>
        </authorList>
    </citation>
    <scope>NUCLEOTIDE SEQUENCE [LARGE SCALE GENOMIC DNA]</scope>
    <source>
        <strain>AX4</strain>
    </source>
</reference>
<feature type="chain" id="PRO_0000391322" description="ABC transporter B family member 1">
    <location>
        <begin position="1"/>
        <end position="909"/>
    </location>
</feature>
<feature type="transmembrane region" description="Helical" evidence="2">
    <location>
        <begin position="85"/>
        <end position="105"/>
    </location>
</feature>
<feature type="transmembrane region" description="Helical" evidence="2">
    <location>
        <begin position="182"/>
        <end position="202"/>
    </location>
</feature>
<feature type="transmembrane region" description="Helical" evidence="2">
    <location>
        <begin position="206"/>
        <end position="226"/>
    </location>
</feature>
<feature type="transmembrane region" description="Helical" evidence="2">
    <location>
        <begin position="275"/>
        <end position="295"/>
    </location>
</feature>
<feature type="transmembrane region" description="Helical" evidence="2">
    <location>
        <begin position="347"/>
        <end position="367"/>
    </location>
</feature>
<feature type="transmembrane region" description="Helical" evidence="2">
    <location>
        <begin position="392"/>
        <end position="412"/>
    </location>
</feature>
<feature type="transmembrane region" description="Helical" evidence="2">
    <location>
        <begin position="480"/>
        <end position="500"/>
    </location>
</feature>
<feature type="transmembrane region" description="Helical" evidence="2">
    <location>
        <begin position="572"/>
        <end position="592"/>
    </location>
</feature>
<feature type="transmembrane region" description="Helical" evidence="2">
    <location>
        <begin position="607"/>
        <end position="627"/>
    </location>
</feature>
<feature type="domain" description="ABC transmembrane type-1" evidence="2">
    <location>
        <begin position="350"/>
        <end position="633"/>
    </location>
</feature>
<feature type="domain" description="ABC transporter" evidence="1">
    <location>
        <begin position="666"/>
        <end position="902"/>
    </location>
</feature>
<feature type="region of interest" description="Disordered" evidence="3">
    <location>
        <begin position="1"/>
        <end position="36"/>
    </location>
</feature>
<feature type="region of interest" description="Disordered" evidence="3">
    <location>
        <begin position="125"/>
        <end position="147"/>
    </location>
</feature>
<feature type="compositionally biased region" description="Polar residues" evidence="3">
    <location>
        <begin position="14"/>
        <end position="36"/>
    </location>
</feature>
<feature type="compositionally biased region" description="Low complexity" evidence="3">
    <location>
        <begin position="125"/>
        <end position="134"/>
    </location>
</feature>
<feature type="compositionally biased region" description="Pro residues" evidence="3">
    <location>
        <begin position="135"/>
        <end position="145"/>
    </location>
</feature>
<feature type="binding site" evidence="1">
    <location>
        <begin position="701"/>
        <end position="708"/>
    </location>
    <ligand>
        <name>ATP</name>
        <dbReference type="ChEBI" id="CHEBI:30616"/>
    </ligand>
</feature>
<feature type="sequence conflict" description="In Ref. 1; AAL74248." evidence="4" ref="1">
    <original>R</original>
    <variation>S</variation>
    <location>
        <position position="903"/>
    </location>
</feature>
<feature type="sequence conflict" description="In Ref. 1; AAL74248." evidence="4" ref="1">
    <original>D</original>
    <variation>G</variation>
    <location>
        <position position="909"/>
    </location>
</feature>
<proteinExistence type="inferred from homology"/>
<name>ABCB1_DICDI</name>